<accession>P09125</accession>
<reference key="1">
    <citation type="journal article" date="1988" name="Nucleic Acids Res.">
        <title>A cDNA encoding a merozoite surface protein of the protozoan Eimeria acervulina contains tandem-repeated sequences.</title>
        <authorList>
            <person name="Jenkins M.C."/>
        </authorList>
    </citation>
    <scope>NUCLEOTIDE SEQUENCE [MRNA]</scope>
    <source>
        <strain>12</strain>
    </source>
</reference>
<evidence type="ECO:0000256" key="1">
    <source>
        <dbReference type="SAM" id="MobiDB-lite"/>
    </source>
</evidence>
<feature type="chain" id="PRO_0000096601" description="Merozoite surface protein CMZ-8">
    <location>
        <begin position="1" status="less than"/>
        <end position="259"/>
    </location>
</feature>
<feature type="repeat" description="1">
    <location>
        <begin position="5"/>
        <end position="11"/>
    </location>
</feature>
<feature type="repeat" description="2">
    <location>
        <begin position="12"/>
        <end position="18"/>
    </location>
</feature>
<feature type="repeat" description="3">
    <location>
        <begin position="19"/>
        <end position="25"/>
    </location>
</feature>
<feature type="repeat" description="4">
    <location>
        <begin position="26"/>
        <end position="32"/>
    </location>
</feature>
<feature type="repeat" description="5">
    <location>
        <begin position="33"/>
        <end position="39"/>
    </location>
</feature>
<feature type="repeat" description="6">
    <location>
        <begin position="40"/>
        <end position="46"/>
    </location>
</feature>
<feature type="repeat" description="7">
    <location>
        <begin position="47"/>
        <end position="53"/>
    </location>
</feature>
<feature type="repeat" description="8">
    <location>
        <begin position="54"/>
        <end position="60"/>
    </location>
</feature>
<feature type="repeat" description="9">
    <location>
        <begin position="61"/>
        <end position="67"/>
    </location>
</feature>
<feature type="repeat" description="10">
    <location>
        <begin position="68"/>
        <end position="74"/>
    </location>
</feature>
<feature type="repeat" description="11">
    <location>
        <begin position="75"/>
        <end position="81"/>
    </location>
</feature>
<feature type="repeat" description="12">
    <location>
        <begin position="82"/>
        <end position="88"/>
    </location>
</feature>
<feature type="repeat" description="13">
    <location>
        <begin position="89"/>
        <end position="95"/>
    </location>
</feature>
<feature type="repeat" description="14">
    <location>
        <begin position="96"/>
        <end position="102"/>
    </location>
</feature>
<feature type="repeat" description="15">
    <location>
        <begin position="103"/>
        <end position="109"/>
    </location>
</feature>
<feature type="region of interest" description="Disordered" evidence="1">
    <location>
        <begin position="1"/>
        <end position="127"/>
    </location>
</feature>
<feature type="region of interest" description="15 X 7 AA repeats of S-P-P-S-T-P-V">
    <location>
        <begin position="5"/>
        <end position="109"/>
    </location>
</feature>
<feature type="region of interest" description="Disordered" evidence="1">
    <location>
        <begin position="174"/>
        <end position="203"/>
    </location>
</feature>
<feature type="compositionally biased region" description="Pro residues" evidence="1">
    <location>
        <begin position="1"/>
        <end position="108"/>
    </location>
</feature>
<feature type="compositionally biased region" description="Basic residues" evidence="1">
    <location>
        <begin position="184"/>
        <end position="203"/>
    </location>
</feature>
<feature type="non-terminal residue">
    <location>
        <position position="1"/>
    </location>
</feature>
<dbReference type="EMBL" id="X12445">
    <property type="protein sequence ID" value="CAA30977.1"/>
    <property type="molecule type" value="mRNA"/>
</dbReference>
<dbReference type="PIR" id="S01704">
    <property type="entry name" value="S01704"/>
</dbReference>
<keyword id="KW-0477">Merozoite</keyword>
<keyword id="KW-0677">Repeat</keyword>
<sequence>PLPFSPPSTPVSPPSTPVSPPSTPVSPPSTPVSPPSTPVSPPSTPVSPPSTPVSPPSTPVSPPSTPVSPPSTPVSPPSTPVSPPSTPVSPPSTPVSPPSTPVSPPSSPAPGAVGGVNSSLSQRSTSEHWHASVSVQFERWRDRTPASGLRFAPLAEGWAILTAASCNLHNIRQRPGSSAADRRHCTRSTRSSRRMSRRHRHKGGLRGFVSRCRRSGCCRFSSFASPTIRSKLTGYGVADVGCGVLFVLRHTARRILARS</sequence>
<protein>
    <recommendedName>
        <fullName>Merozoite surface protein CMZ-8</fullName>
    </recommendedName>
</protein>
<organism>
    <name type="scientific">Eimeria acervulina</name>
    <name type="common">Coccidian parasite</name>
    <dbReference type="NCBI Taxonomy" id="5801"/>
    <lineage>
        <taxon>Eukaryota</taxon>
        <taxon>Sar</taxon>
        <taxon>Alveolata</taxon>
        <taxon>Apicomplexa</taxon>
        <taxon>Conoidasida</taxon>
        <taxon>Coccidia</taxon>
        <taxon>Eucoccidiorida</taxon>
        <taxon>Eimeriorina</taxon>
        <taxon>Eimeriidae</taxon>
        <taxon>Eimeria</taxon>
    </lineage>
</organism>
<name>MSP8_EIMAC</name>
<proteinExistence type="evidence at transcript level"/>